<protein>
    <recommendedName>
        <fullName>Phenylethanolamine N-methyltransferase</fullName>
        <shortName>PNMTase</shortName>
        <ecNumber evidence="4 6 7">2.1.1.28</ecNumber>
    </recommendedName>
    <alternativeName>
        <fullName>Noradrenaline N-methyltransferase</fullName>
    </alternativeName>
</protein>
<dbReference type="EC" id="2.1.1.28" evidence="4 6 7"/>
<dbReference type="EMBL" id="J03727">
    <property type="protein sequence ID" value="AAA60130.1"/>
    <property type="molecule type" value="mRNA"/>
</dbReference>
<dbReference type="EMBL" id="X52730">
    <property type="protein sequence ID" value="CAA36944.1"/>
    <property type="molecule type" value="Genomic_DNA"/>
</dbReference>
<dbReference type="EMBL" id="J03280">
    <property type="protein sequence ID" value="AAA60131.1"/>
    <property type="molecule type" value="Genomic_DNA"/>
</dbReference>
<dbReference type="EMBL" id="AC087491">
    <property type="status" value="NOT_ANNOTATED_CDS"/>
    <property type="molecule type" value="Genomic_DNA"/>
</dbReference>
<dbReference type="EMBL" id="BC037246">
    <property type="protein sequence ID" value="AAH37246.1"/>
    <property type="molecule type" value="mRNA"/>
</dbReference>
<dbReference type="CCDS" id="CCDS11343.1"/>
<dbReference type="PIR" id="A28171">
    <property type="entry name" value="A28171"/>
</dbReference>
<dbReference type="RefSeq" id="NP_002677.1">
    <property type="nucleotide sequence ID" value="NM_002686.4"/>
</dbReference>
<dbReference type="PDB" id="1HNN">
    <property type="method" value="X-ray"/>
    <property type="resolution" value="2.40 A"/>
    <property type="chains" value="A/B=1-282"/>
</dbReference>
<dbReference type="PDB" id="1N7I">
    <property type="method" value="X-ray"/>
    <property type="resolution" value="2.80 A"/>
    <property type="chains" value="A/B=1-282"/>
</dbReference>
<dbReference type="PDB" id="1N7J">
    <property type="method" value="X-ray"/>
    <property type="resolution" value="2.70 A"/>
    <property type="chains" value="A/B=1-282"/>
</dbReference>
<dbReference type="PDB" id="1YZ3">
    <property type="method" value="X-ray"/>
    <property type="resolution" value="2.40 A"/>
    <property type="chains" value="A/B=1-282"/>
</dbReference>
<dbReference type="PDB" id="2AN3">
    <property type="method" value="X-ray"/>
    <property type="resolution" value="2.20 A"/>
    <property type="chains" value="A/B=1-282"/>
</dbReference>
<dbReference type="PDB" id="2AN4">
    <property type="method" value="X-ray"/>
    <property type="resolution" value="2.20 A"/>
    <property type="chains" value="A/B=1-282"/>
</dbReference>
<dbReference type="PDB" id="2AN5">
    <property type="method" value="X-ray"/>
    <property type="resolution" value="2.50 A"/>
    <property type="chains" value="A/B=1-282"/>
</dbReference>
<dbReference type="PDB" id="2G70">
    <property type="method" value="X-ray"/>
    <property type="resolution" value="2.40 A"/>
    <property type="chains" value="A/B=1-282"/>
</dbReference>
<dbReference type="PDB" id="2G71">
    <property type="method" value="X-ray"/>
    <property type="resolution" value="2.20 A"/>
    <property type="chains" value="A/B=1-282"/>
</dbReference>
<dbReference type="PDB" id="2G72">
    <property type="method" value="X-ray"/>
    <property type="resolution" value="2.00 A"/>
    <property type="chains" value="A/B=1-282"/>
</dbReference>
<dbReference type="PDB" id="2G8N">
    <property type="method" value="X-ray"/>
    <property type="resolution" value="2.15 A"/>
    <property type="chains" value="A/B=1-282"/>
</dbReference>
<dbReference type="PDB" id="2OBF">
    <property type="method" value="X-ray"/>
    <property type="resolution" value="2.30 A"/>
    <property type="chains" value="A/B=1-282"/>
</dbReference>
<dbReference type="PDB" id="2ONY">
    <property type="method" value="X-ray"/>
    <property type="resolution" value="2.60 A"/>
    <property type="chains" value="A/B=1-282"/>
</dbReference>
<dbReference type="PDB" id="2ONZ">
    <property type="method" value="X-ray"/>
    <property type="resolution" value="2.80 A"/>
    <property type="chains" value="A/B=1-282"/>
</dbReference>
<dbReference type="PDB" id="2OPB">
    <property type="method" value="X-ray"/>
    <property type="resolution" value="2.80 A"/>
    <property type="chains" value="A/B=1-282"/>
</dbReference>
<dbReference type="PDB" id="3HCA">
    <property type="method" value="X-ray"/>
    <property type="resolution" value="2.40 A"/>
    <property type="chains" value="A/B=1-282"/>
</dbReference>
<dbReference type="PDB" id="3HCB">
    <property type="method" value="X-ray"/>
    <property type="resolution" value="2.40 A"/>
    <property type="chains" value="A/B=1-282"/>
</dbReference>
<dbReference type="PDB" id="3HCC">
    <property type="method" value="X-ray"/>
    <property type="resolution" value="2.30 A"/>
    <property type="chains" value="A/B=1-282"/>
</dbReference>
<dbReference type="PDB" id="3HCD">
    <property type="method" value="X-ray"/>
    <property type="resolution" value="2.39 A"/>
    <property type="chains" value="A/B=1-282"/>
</dbReference>
<dbReference type="PDB" id="3HCE">
    <property type="method" value="X-ray"/>
    <property type="resolution" value="2.85 A"/>
    <property type="chains" value="A/B=1-282"/>
</dbReference>
<dbReference type="PDB" id="3HCF">
    <property type="method" value="X-ray"/>
    <property type="resolution" value="2.70 A"/>
    <property type="chains" value="A/B=1-282"/>
</dbReference>
<dbReference type="PDB" id="3KPJ">
    <property type="method" value="X-ray"/>
    <property type="resolution" value="2.50 A"/>
    <property type="chains" value="A/B=1-282"/>
</dbReference>
<dbReference type="PDB" id="3KPU">
    <property type="method" value="X-ray"/>
    <property type="resolution" value="2.40 A"/>
    <property type="chains" value="A/B=1-282"/>
</dbReference>
<dbReference type="PDB" id="3KPV">
    <property type="method" value="X-ray"/>
    <property type="resolution" value="2.40 A"/>
    <property type="chains" value="A/B=1-282"/>
</dbReference>
<dbReference type="PDB" id="3KPW">
    <property type="method" value="X-ray"/>
    <property type="resolution" value="2.40 A"/>
    <property type="chains" value="A/B=1-282"/>
</dbReference>
<dbReference type="PDB" id="3KPY">
    <property type="method" value="X-ray"/>
    <property type="resolution" value="2.40 A"/>
    <property type="chains" value="A/B=1-282"/>
</dbReference>
<dbReference type="PDB" id="3KQM">
    <property type="method" value="X-ray"/>
    <property type="resolution" value="2.40 A"/>
    <property type="chains" value="A/B=1-282"/>
</dbReference>
<dbReference type="PDB" id="3KQO">
    <property type="method" value="X-ray"/>
    <property type="resolution" value="2.40 A"/>
    <property type="chains" value="A/B=1-282"/>
</dbReference>
<dbReference type="PDB" id="3KQP">
    <property type="method" value="X-ray"/>
    <property type="resolution" value="2.40 A"/>
    <property type="chains" value="A/B=1-282"/>
</dbReference>
<dbReference type="PDB" id="3KQQ">
    <property type="method" value="X-ray"/>
    <property type="resolution" value="2.50 A"/>
    <property type="chains" value="A/B=1-282"/>
</dbReference>
<dbReference type="PDB" id="3KQS">
    <property type="method" value="X-ray"/>
    <property type="resolution" value="2.00 A"/>
    <property type="chains" value="A/B=1-282"/>
</dbReference>
<dbReference type="PDB" id="3KQT">
    <property type="method" value="X-ray"/>
    <property type="resolution" value="2.40 A"/>
    <property type="chains" value="A/B=1-282"/>
</dbReference>
<dbReference type="PDB" id="3KQV">
    <property type="method" value="X-ray"/>
    <property type="resolution" value="2.30 A"/>
    <property type="chains" value="A/B=1-282"/>
</dbReference>
<dbReference type="PDB" id="3KQW">
    <property type="method" value="X-ray"/>
    <property type="resolution" value="2.49 A"/>
    <property type="chains" value="A/B=1-282"/>
</dbReference>
<dbReference type="PDB" id="3KQY">
    <property type="method" value="X-ray"/>
    <property type="resolution" value="2.20 A"/>
    <property type="chains" value="A/B=1-282"/>
</dbReference>
<dbReference type="PDB" id="3KR0">
    <property type="method" value="X-ray"/>
    <property type="resolution" value="2.60 A"/>
    <property type="chains" value="A/B=1-282"/>
</dbReference>
<dbReference type="PDB" id="3KR1">
    <property type="method" value="X-ray"/>
    <property type="resolution" value="2.30 A"/>
    <property type="chains" value="A/B=1-282"/>
</dbReference>
<dbReference type="PDB" id="3KR2">
    <property type="method" value="X-ray"/>
    <property type="resolution" value="2.30 A"/>
    <property type="chains" value="A/B=1-282"/>
</dbReference>
<dbReference type="PDB" id="4DM3">
    <property type="method" value="X-ray"/>
    <property type="resolution" value="2.40 A"/>
    <property type="chains" value="A/B=1-282"/>
</dbReference>
<dbReference type="PDB" id="4MIK">
    <property type="method" value="X-ray"/>
    <property type="resolution" value="1.95 A"/>
    <property type="chains" value="A/B=1-282"/>
</dbReference>
<dbReference type="PDB" id="4MQ4">
    <property type="method" value="X-ray"/>
    <property type="resolution" value="2.20 A"/>
    <property type="chains" value="A/B=1-282"/>
</dbReference>
<dbReference type="PDB" id="6WS1">
    <property type="method" value="X-ray"/>
    <property type="resolution" value="2.76 A"/>
    <property type="chains" value="A/B=1-282"/>
</dbReference>
<dbReference type="PDB" id="7TWU">
    <property type="method" value="X-ray"/>
    <property type="resolution" value="2.10 A"/>
    <property type="chains" value="A/B=1-282"/>
</dbReference>
<dbReference type="PDB" id="7TX2">
    <property type="method" value="X-ray"/>
    <property type="resolution" value="2.43 A"/>
    <property type="chains" value="A/B=1-282"/>
</dbReference>
<dbReference type="PDBsum" id="1HNN"/>
<dbReference type="PDBsum" id="1N7I"/>
<dbReference type="PDBsum" id="1N7J"/>
<dbReference type="PDBsum" id="1YZ3"/>
<dbReference type="PDBsum" id="2AN3"/>
<dbReference type="PDBsum" id="2AN4"/>
<dbReference type="PDBsum" id="2AN5"/>
<dbReference type="PDBsum" id="2G70"/>
<dbReference type="PDBsum" id="2G71"/>
<dbReference type="PDBsum" id="2G72"/>
<dbReference type="PDBsum" id="2G8N"/>
<dbReference type="PDBsum" id="2OBF"/>
<dbReference type="PDBsum" id="2ONY"/>
<dbReference type="PDBsum" id="2ONZ"/>
<dbReference type="PDBsum" id="2OPB"/>
<dbReference type="PDBsum" id="3HCA"/>
<dbReference type="PDBsum" id="3HCB"/>
<dbReference type="PDBsum" id="3HCC"/>
<dbReference type="PDBsum" id="3HCD"/>
<dbReference type="PDBsum" id="3HCE"/>
<dbReference type="PDBsum" id="3HCF"/>
<dbReference type="PDBsum" id="3KPJ"/>
<dbReference type="PDBsum" id="3KPU"/>
<dbReference type="PDBsum" id="3KPV"/>
<dbReference type="PDBsum" id="3KPW"/>
<dbReference type="PDBsum" id="3KPY"/>
<dbReference type="PDBsum" id="3KQM"/>
<dbReference type="PDBsum" id="3KQO"/>
<dbReference type="PDBsum" id="3KQP"/>
<dbReference type="PDBsum" id="3KQQ"/>
<dbReference type="PDBsum" id="3KQS"/>
<dbReference type="PDBsum" id="3KQT"/>
<dbReference type="PDBsum" id="3KQV"/>
<dbReference type="PDBsum" id="3KQW"/>
<dbReference type="PDBsum" id="3KQY"/>
<dbReference type="PDBsum" id="3KR0"/>
<dbReference type="PDBsum" id="3KR1"/>
<dbReference type="PDBsum" id="3KR2"/>
<dbReference type="PDBsum" id="4DM3"/>
<dbReference type="PDBsum" id="4MIK"/>
<dbReference type="PDBsum" id="4MQ4"/>
<dbReference type="PDBsum" id="6WS1"/>
<dbReference type="PDBsum" id="7TWU"/>
<dbReference type="PDBsum" id="7TX2"/>
<dbReference type="PCDDB" id="P11086"/>
<dbReference type="SMR" id="P11086"/>
<dbReference type="BioGRID" id="111410">
    <property type="interactions" value="15"/>
</dbReference>
<dbReference type="FunCoup" id="P11086">
    <property type="interactions" value="621"/>
</dbReference>
<dbReference type="IntAct" id="P11086">
    <property type="interactions" value="5"/>
</dbReference>
<dbReference type="STRING" id="9606.ENSP00000269582"/>
<dbReference type="BindingDB" id="P11086"/>
<dbReference type="ChEMBL" id="CHEMBL4617"/>
<dbReference type="DrugBank" id="DB08129">
    <property type="generic name" value="(1R)-2-amino-1-[3-(trifluoromethyl)phenyl]ethanol"/>
</dbReference>
<dbReference type="DrugBank" id="DB08128">
    <property type="generic name" value="(1S,4R,9S)-5-(trifluoromethyl)-1,2,3,4-tetrahydro-1,4-methanonaphthalen-9-amine"/>
</dbReference>
<dbReference type="DrugBank" id="DB07739">
    <property type="generic name" value="(3R)-3-(FLUOROMETHYL)-7-(THIOMORPHOLIN-4-YLSULFONYL)-1,2,3,4-TETRAHYDROISOQUINOLINE"/>
</dbReference>
<dbReference type="DrugBank" id="DB07798">
    <property type="generic name" value="(3R)-3-(FLUOROMETHYL)-N-(3,3,3-TRIFLUOROPROPYL)-1,2,3,4-TETRAHYDROISOQUINOLINE-7-SULFONAMIDE"/>
</dbReference>
<dbReference type="DrugBank" id="DB07747">
    <property type="generic name" value="(3R)-N-(4-CHLOROPHENYL)-3-(HYDROXYMETHYL)-1,2,3,4-TETRAHYDROISOQUINOLINE-7-SULFONAMIDE"/>
</dbReference>
<dbReference type="DrugBank" id="DB03468">
    <property type="generic name" value="1,2,3,4-Tetrahydro-Isoquinoline-7-Sulfonic Acid Amide"/>
</dbReference>
<dbReference type="DrugBank" id="DB08550">
    <property type="generic name" value="7,8-Dichloro-1,2,3,4-tetrahydroisoquinoline"/>
</dbReference>
<dbReference type="DrugBank" id="DB03824">
    <property type="generic name" value="7-Iodo-1,2,3,4-Tetrahydro-Isoquinoline"/>
</dbReference>
<dbReference type="DrugBank" id="DB04273">
    <property type="generic name" value="8,9-Dichloro-2,3,4,5-Tetrahydro-1h-Benzo[C]Azepine"/>
</dbReference>
<dbReference type="DrugBank" id="DB07906">
    <property type="generic name" value="[(3R)-7-NITRO-1,2,3,4-TETRAHYDROISOQUINOLIN-3-YL]METHANOL"/>
</dbReference>
<dbReference type="DrugBank" id="DB07597">
    <property type="generic name" value="CIS-(1R,2S)-2-AMINO-1,2,3,4-TETRAHYDRONAPHTHALEN-1-OL"/>
</dbReference>
<dbReference type="DrugBank" id="DB09571">
    <property type="generic name" value="Levmetamfetamine"/>
</dbReference>
<dbReference type="DrugBank" id="DB00968">
    <property type="generic name" value="Methyldopa"/>
</dbReference>
<dbReference type="DrugBank" id="DB08631">
    <property type="generic name" value="N-(4-CHLOROPHENYL)-1,2,3,4-TETRAHYDROISOQUINOLINE-7-SULFONAMIDE"/>
</dbReference>
<dbReference type="DrugBank" id="DB01752">
    <property type="generic name" value="S-adenosyl-L-homocysteine"/>
</dbReference>
<dbReference type="DrugBank" id="DB08654">
    <property type="generic name" value="TRANS-(1S,2S)-2-AMINO-1,2,3,4-TETRAHYDRONAPHTHALEN-1-OL"/>
</dbReference>
<dbReference type="DrugCentral" id="P11086"/>
<dbReference type="GuidetoPHARMACOLOGY" id="2496"/>
<dbReference type="iPTMnet" id="P11086"/>
<dbReference type="PhosphoSitePlus" id="P11086"/>
<dbReference type="BioMuta" id="PNMT"/>
<dbReference type="DMDM" id="130375"/>
<dbReference type="CPTAC" id="CPTAC-150"/>
<dbReference type="CPTAC" id="CPTAC-151"/>
<dbReference type="jPOST" id="P11086"/>
<dbReference type="MassIVE" id="P11086"/>
<dbReference type="PaxDb" id="9606-ENSP00000269582"/>
<dbReference type="PeptideAtlas" id="P11086"/>
<dbReference type="ProteomicsDB" id="52692"/>
<dbReference type="Pumba" id="P11086"/>
<dbReference type="Antibodypedia" id="28325">
    <property type="antibodies" value="536 antibodies from 33 providers"/>
</dbReference>
<dbReference type="CPTC" id="P11086">
    <property type="antibodies" value="3 antibodies"/>
</dbReference>
<dbReference type="DNASU" id="5409"/>
<dbReference type="Ensembl" id="ENST00000269582.3">
    <property type="protein sequence ID" value="ENSP00000269582.2"/>
    <property type="gene ID" value="ENSG00000141744.4"/>
</dbReference>
<dbReference type="GeneID" id="5409"/>
<dbReference type="KEGG" id="hsa:5409"/>
<dbReference type="MANE-Select" id="ENST00000269582.3">
    <property type="protein sequence ID" value="ENSP00000269582.2"/>
    <property type="RefSeq nucleotide sequence ID" value="NM_002686.4"/>
    <property type="RefSeq protein sequence ID" value="NP_002677.1"/>
</dbReference>
<dbReference type="UCSC" id="uc002hsi.3">
    <property type="organism name" value="human"/>
</dbReference>
<dbReference type="AGR" id="HGNC:9160"/>
<dbReference type="CTD" id="5409"/>
<dbReference type="DisGeNET" id="5409"/>
<dbReference type="GeneCards" id="PNMT"/>
<dbReference type="HGNC" id="HGNC:9160">
    <property type="gene designation" value="PNMT"/>
</dbReference>
<dbReference type="HPA" id="ENSG00000141744">
    <property type="expression patterns" value="Tissue enhanced (adrenal gland, brain)"/>
</dbReference>
<dbReference type="MalaCards" id="PNMT"/>
<dbReference type="MIM" id="171190">
    <property type="type" value="gene"/>
</dbReference>
<dbReference type="neXtProt" id="NX_P11086"/>
<dbReference type="OpenTargets" id="ENSG00000141744"/>
<dbReference type="PharmGKB" id="PA274"/>
<dbReference type="VEuPathDB" id="HostDB:ENSG00000141744"/>
<dbReference type="eggNOG" id="ENOG502QT44">
    <property type="taxonomic scope" value="Eukaryota"/>
</dbReference>
<dbReference type="GeneTree" id="ENSGT00390000011708"/>
<dbReference type="HOGENOM" id="CLU_082526_2_0_1"/>
<dbReference type="InParanoid" id="P11086"/>
<dbReference type="OMA" id="NNYMPPR"/>
<dbReference type="OrthoDB" id="10050085at2759"/>
<dbReference type="PAN-GO" id="P11086">
    <property type="GO annotations" value="2 GO annotations based on evolutionary models"/>
</dbReference>
<dbReference type="PhylomeDB" id="P11086"/>
<dbReference type="TreeFam" id="TF313114"/>
<dbReference type="BioCyc" id="MetaCyc:HS06868-MONOMER"/>
<dbReference type="BRENDA" id="2.1.1.28">
    <property type="organism ID" value="2681"/>
</dbReference>
<dbReference type="PathwayCommons" id="P11086"/>
<dbReference type="Reactome" id="R-HSA-209905">
    <property type="pathway name" value="Catecholamine biosynthesis"/>
</dbReference>
<dbReference type="SABIO-RK" id="P11086"/>
<dbReference type="SignaLink" id="P11086"/>
<dbReference type="SIGNOR" id="P11086"/>
<dbReference type="UniPathway" id="UPA00749">
    <property type="reaction ID" value="UER00736"/>
</dbReference>
<dbReference type="BioGRID-ORCS" id="5409">
    <property type="hits" value="16 hits in 1158 CRISPR screens"/>
</dbReference>
<dbReference type="EvolutionaryTrace" id="P11086"/>
<dbReference type="GenomeRNAi" id="5409"/>
<dbReference type="Pharos" id="P11086">
    <property type="development level" value="Tchem"/>
</dbReference>
<dbReference type="PRO" id="PR:P11086"/>
<dbReference type="Proteomes" id="UP000005640">
    <property type="component" value="Chromosome 17"/>
</dbReference>
<dbReference type="RNAct" id="P11086">
    <property type="molecule type" value="protein"/>
</dbReference>
<dbReference type="Bgee" id="ENSG00000141744">
    <property type="expression patterns" value="Expressed in male germ line stem cell (sensu Vertebrata) in testis and 124 other cell types or tissues"/>
</dbReference>
<dbReference type="ExpressionAtlas" id="P11086">
    <property type="expression patterns" value="baseline and differential"/>
</dbReference>
<dbReference type="GO" id="GO:0005829">
    <property type="term" value="C:cytosol"/>
    <property type="evidence" value="ECO:0000318"/>
    <property type="project" value="GO_Central"/>
</dbReference>
<dbReference type="GO" id="GO:0004603">
    <property type="term" value="F:phenylethanolamine N-methyltransferase activity"/>
    <property type="evidence" value="ECO:0000314"/>
    <property type="project" value="UniProtKB"/>
</dbReference>
<dbReference type="GO" id="GO:0042423">
    <property type="term" value="P:catecholamine biosynthetic process"/>
    <property type="evidence" value="ECO:0000304"/>
    <property type="project" value="Reactome"/>
</dbReference>
<dbReference type="GO" id="GO:0042418">
    <property type="term" value="P:epinephrine biosynthetic process"/>
    <property type="evidence" value="ECO:0007669"/>
    <property type="project" value="UniProtKB-UniPathway"/>
</dbReference>
<dbReference type="GO" id="GO:0032259">
    <property type="term" value="P:methylation"/>
    <property type="evidence" value="ECO:0007669"/>
    <property type="project" value="UniProtKB-KW"/>
</dbReference>
<dbReference type="CDD" id="cd02440">
    <property type="entry name" value="AdoMet_MTases"/>
    <property type="match status" value="1"/>
</dbReference>
<dbReference type="FunFam" id="3.40.50.150:FF:000065">
    <property type="entry name" value="Phenylethanolamine N-methyltransferase"/>
    <property type="match status" value="1"/>
</dbReference>
<dbReference type="Gene3D" id="3.40.50.150">
    <property type="entry name" value="Vaccinia Virus protein VP39"/>
    <property type="match status" value="1"/>
</dbReference>
<dbReference type="InterPro" id="IPR025820">
    <property type="entry name" value="NNMT/PNMT/TEMT_CS"/>
</dbReference>
<dbReference type="InterPro" id="IPR000940">
    <property type="entry name" value="NNMT_TEMT_trans"/>
</dbReference>
<dbReference type="InterPro" id="IPR053384">
    <property type="entry name" value="SAM-dep_methyltransferase"/>
</dbReference>
<dbReference type="InterPro" id="IPR029063">
    <property type="entry name" value="SAM-dependent_MTases_sf"/>
</dbReference>
<dbReference type="NCBIfam" id="NF041360">
    <property type="entry name" value="GntF_guanitoxin"/>
    <property type="match status" value="1"/>
</dbReference>
<dbReference type="PANTHER" id="PTHR10867">
    <property type="entry name" value="NNMT/PNMT/TEMT FAMILY MEMBER"/>
    <property type="match status" value="1"/>
</dbReference>
<dbReference type="PANTHER" id="PTHR10867:SF18">
    <property type="entry name" value="PHENYLETHANOLAMINE N-METHYLTRANSFERASE"/>
    <property type="match status" value="1"/>
</dbReference>
<dbReference type="Pfam" id="PF01234">
    <property type="entry name" value="NNMT_PNMT_TEMT"/>
    <property type="match status" value="1"/>
</dbReference>
<dbReference type="PIRSF" id="PIRSF000384">
    <property type="entry name" value="PNMTase"/>
    <property type="match status" value="1"/>
</dbReference>
<dbReference type="SUPFAM" id="SSF53335">
    <property type="entry name" value="S-adenosyl-L-methionine-dependent methyltransferases"/>
    <property type="match status" value="1"/>
</dbReference>
<dbReference type="PROSITE" id="PS01100">
    <property type="entry name" value="NNMT_PNMT_TEMT"/>
    <property type="match status" value="1"/>
</dbReference>
<dbReference type="PROSITE" id="PS51681">
    <property type="entry name" value="SAM_MT_NNMT_PNMT_TEMT"/>
    <property type="match status" value="1"/>
</dbReference>
<reference key="1">
    <citation type="journal article" date="1988" name="J. Biol. Chem.">
        <title>Molecular cloning of cDNA and chromosomal assignment of the gene for human phenylethanolamine N-methyltransferase, the enzyme for epinephrine biosynthesis.</title>
        <authorList>
            <person name="Kaneda N."/>
            <person name="Ichinose H."/>
            <person name="Kobayashi K."/>
            <person name="Oka K."/>
            <person name="Kishi F."/>
            <person name="Nakazawa A."/>
            <person name="Kurosawa Y."/>
            <person name="Fujita K."/>
            <person name="Nagatsu T."/>
        </authorList>
    </citation>
    <scope>NUCLEOTIDE SEQUENCE [MRNA]</scope>
</reference>
<reference key="2">
    <citation type="journal article" date="1989" name="Neurochem. Int.">
        <title>Structure of human phenylethanolamine N-methyltransferase gene: existence of two types of mRNA with different transcription initiation sites.</title>
        <authorList>
            <person name="Sasaoka T."/>
            <person name="Kaneda N."/>
            <person name="Kurosawa Y."/>
            <person name="Fujita K."/>
            <person name="Nagatsu T."/>
        </authorList>
    </citation>
    <scope>NUCLEOTIDE SEQUENCE [GENOMIC DNA]</scope>
    <source>
        <tissue>Placenta</tissue>
    </source>
</reference>
<reference key="3">
    <citation type="journal article" date="1988" name="Proc. Natl. Acad. Sci. U.S.A.">
        <title>Transgenic mice express the human phenylethanolamine N-methyltransferase gene in adrenal medulla and retina.</title>
        <authorList>
            <person name="Baetge E.E."/>
            <person name="Behringer R.R."/>
            <person name="Messing A."/>
            <person name="Brinster R.L."/>
            <person name="Palmiter R.D."/>
        </authorList>
    </citation>
    <scope>NUCLEOTIDE SEQUENCE [GENOMIC DNA]</scope>
</reference>
<reference key="4">
    <citation type="journal article" date="1996" name="Protein Expr. Purif.">
        <title>Recombinant human phenylethanolamine N-methyltransferase: overproduction in Escherichia coli, purification, and characterization.</title>
        <authorList>
            <person name="Caine J.M."/>
            <person name="Macreadie I.G."/>
            <person name="Grunewald G.L."/>
            <person name="McLeish M.J."/>
        </authorList>
    </citation>
    <scope>NUCLEOTIDE SEQUENCE [MRNA]</scope>
    <scope>PROTEIN SEQUENCE OF 2-11</scope>
    <scope>CLEAVAGE OF INITIATOR METHIONINE</scope>
    <scope>FUNCTION</scope>
    <scope>CATALYTIC ACTIVITY</scope>
    <scope>BIOPHYSICOCHEMICAL PROPERTIES</scope>
    <scope>MASS SPECTROMETRY</scope>
    <scope>ACTIVITY REGULATION</scope>
</reference>
<reference key="5">
    <citation type="journal article" date="2006" name="Nature">
        <title>DNA sequence of human chromosome 17 and analysis of rearrangement in the human lineage.</title>
        <authorList>
            <person name="Zody M.C."/>
            <person name="Garber M."/>
            <person name="Adams D.J."/>
            <person name="Sharpe T."/>
            <person name="Harrow J."/>
            <person name="Lupski J.R."/>
            <person name="Nicholson C."/>
            <person name="Searle S.M."/>
            <person name="Wilming L."/>
            <person name="Young S.K."/>
            <person name="Abouelleil A."/>
            <person name="Allen N.R."/>
            <person name="Bi W."/>
            <person name="Bloom T."/>
            <person name="Borowsky M.L."/>
            <person name="Bugalter B.E."/>
            <person name="Butler J."/>
            <person name="Chang J.L."/>
            <person name="Chen C.-K."/>
            <person name="Cook A."/>
            <person name="Corum B."/>
            <person name="Cuomo C.A."/>
            <person name="de Jong P.J."/>
            <person name="DeCaprio D."/>
            <person name="Dewar K."/>
            <person name="FitzGerald M."/>
            <person name="Gilbert J."/>
            <person name="Gibson R."/>
            <person name="Gnerre S."/>
            <person name="Goldstein S."/>
            <person name="Grafham D.V."/>
            <person name="Grocock R."/>
            <person name="Hafez N."/>
            <person name="Hagopian D.S."/>
            <person name="Hart E."/>
            <person name="Norman C.H."/>
            <person name="Humphray S."/>
            <person name="Jaffe D.B."/>
            <person name="Jones M."/>
            <person name="Kamal M."/>
            <person name="Khodiyar V.K."/>
            <person name="LaButti K."/>
            <person name="Laird G."/>
            <person name="Lehoczky J."/>
            <person name="Liu X."/>
            <person name="Lokyitsang T."/>
            <person name="Loveland J."/>
            <person name="Lui A."/>
            <person name="Macdonald P."/>
            <person name="Major J.E."/>
            <person name="Matthews L."/>
            <person name="Mauceli E."/>
            <person name="McCarroll S.A."/>
            <person name="Mihalev A.H."/>
            <person name="Mudge J."/>
            <person name="Nguyen C."/>
            <person name="Nicol R."/>
            <person name="O'Leary S.B."/>
            <person name="Osoegawa K."/>
            <person name="Schwartz D.C."/>
            <person name="Shaw-Smith C."/>
            <person name="Stankiewicz P."/>
            <person name="Steward C."/>
            <person name="Swarbreck D."/>
            <person name="Venkataraman V."/>
            <person name="Whittaker C.A."/>
            <person name="Yang X."/>
            <person name="Zimmer A.R."/>
            <person name="Bradley A."/>
            <person name="Hubbard T."/>
            <person name="Birren B.W."/>
            <person name="Rogers J."/>
            <person name="Lander E.S."/>
            <person name="Nusbaum C."/>
        </authorList>
    </citation>
    <scope>NUCLEOTIDE SEQUENCE [LARGE SCALE GENOMIC DNA]</scope>
</reference>
<reference key="6">
    <citation type="journal article" date="2004" name="Genome Res.">
        <title>The status, quality, and expansion of the NIH full-length cDNA project: the Mammalian Gene Collection (MGC).</title>
        <authorList>
            <consortium name="The MGC Project Team"/>
        </authorList>
    </citation>
    <scope>NUCLEOTIDE SEQUENCE [LARGE SCALE MRNA]</scope>
    <source>
        <tissue>Brain</tissue>
        <tissue>Lung</tissue>
        <tissue>Testis</tissue>
    </source>
</reference>
<reference key="7">
    <citation type="journal article" date="2010" name="Mol. Cells">
        <title>Discovery of novel human phenylethanolamine N-methyltransferase (hPNMT) inhibitors using 3D pharmacophore-based in silico, biophysical screening and enzymatic activity assays.</title>
        <authorList>
            <person name="Kang D.I."/>
            <person name="Lee J.Y."/>
            <person name="Kim W."/>
            <person name="Jeong K.W."/>
            <person name="Shin S."/>
            <person name="Yang J."/>
            <person name="Park E."/>
            <person name="Chae Y.K."/>
            <person name="Kim Y."/>
        </authorList>
    </citation>
    <scope>FUNCTION</scope>
    <scope>CATALYTIC ACTIVITY</scope>
    <scope>ACTIVITY REGULATION</scope>
    <scope>PATHWAY</scope>
</reference>
<reference key="8">
    <citation type="journal article" date="2013" name="J. Proteome Res.">
        <title>Toward a comprehensive characterization of a human cancer cell phosphoproteome.</title>
        <authorList>
            <person name="Zhou H."/>
            <person name="Di Palma S."/>
            <person name="Preisinger C."/>
            <person name="Peng M."/>
            <person name="Polat A.N."/>
            <person name="Heck A.J."/>
            <person name="Mohammed S."/>
        </authorList>
    </citation>
    <scope>PHOSPHORYLATION [LARGE SCALE ANALYSIS] AT SER-7</scope>
    <scope>IDENTIFICATION BY MASS SPECTROMETRY [LARGE SCALE ANALYSIS]</scope>
    <source>
        <tissue>Erythroleukemia</tissue>
    </source>
</reference>
<reference key="9">
    <citation type="journal article" date="2001" name="Structure">
        <title>Getting the adrenaline going: crystal structure of the adrenaline-synthesizing enzyme PNMT.</title>
        <authorList>
            <person name="Martin J.L."/>
            <person name="Begun J."/>
            <person name="McLeish M.J."/>
            <person name="Caine J.M."/>
            <person name="Grunewald G.L."/>
        </authorList>
    </citation>
    <scope>X-RAY CRYSTALLOGRAPHY (2.4 ANGSTROMS) IN COMPLEX WITH S-ADENOSYL-L-HOMOCYSTEINE AND SYNTHETIC INHIBITOR</scope>
</reference>
<reference key="10">
    <citation type="journal article" date="2005" name="Biochemistry">
        <title>Mode of binding of methyl acceptor substrates to the adrenaline-synthesizing enzyme phenylethanolamine N-methyltransferase: implications for catalysis.</title>
        <authorList>
            <person name="Gee C.L."/>
            <person name="Tyndall J.D.A."/>
            <person name="Grunewald G.L."/>
            <person name="Wu Q."/>
            <person name="McLeish M.J."/>
            <person name="Martin J.L."/>
        </authorList>
    </citation>
    <scope>X-RAY CRYSTALLOGRAPHY (2.2 ANGSTROMS) IN COMPLEXES WITH SUBSTRATE ANALOGS AND S-ADENOSYL-L-HOMOCYSTEINE</scope>
    <scope>BIOPHYSICOCHEMICAL PROPERTIES</scope>
    <scope>MUTAGENESIS OF TYR-35; GLU-185; GLU-219 AND ASP-267</scope>
    <scope>FUNCTION</scope>
    <scope>CATALYTIC ACTIVITY</scope>
    <scope>S-ADENOSYL-L-METHIONINE-BINDING SITES</scope>
    <scope>OCTOPAMINE-BINDING SITES</scope>
</reference>
<reference key="11">
    <citation type="journal article" date="2006" name="J. Med. Chem.">
        <title>Comparison of the binding of 3-fluoromethyl-7-sulfonyl-1,2,3,4-tetrahydroisoquinolines with their isosteric sulfonamides to the active site of phenylethanolamine N-methyltransferase.</title>
        <authorList>
            <person name="Grunewald G.L."/>
            <person name="Seim M.R."/>
            <person name="Regier R.C."/>
            <person name="Martin J.L."/>
            <person name="Gee C.L."/>
            <person name="Drinkwater N."/>
            <person name="Criscione K.R."/>
        </authorList>
    </citation>
    <scope>X-RAY CRYSTALLOGRAPHY (2.15 ANGSTROMS) IN COMPLEX WITH SYNTHETIC INHIBITOR</scope>
</reference>
<reference key="12">
    <citation type="journal article" date="2007" name="J. Med. Chem.">
        <title>Enzyme adaptation to inhibitor binding: a cryptic binding site in phenylethanolamine N-methyltransferase.</title>
        <authorList>
            <person name="Gee C.L."/>
            <person name="Drinkwater N."/>
            <person name="Tyndall J.D.A."/>
            <person name="Grunewald G.L."/>
            <person name="Wu Q."/>
            <person name="McLeish M.J."/>
            <person name="Martin J.L."/>
        </authorList>
    </citation>
    <scope>X-RAY CRYSTALLOGRAPHY (2.0 ANGSTROMS) IN COMPLEXES WITH SYNTHETIC INHIBITOR</scope>
    <scope>S-ADENOSYL-L-METHIONINE-BINDING SITES</scope>
</reference>
<reference key="13">
    <citation type="journal article" date="2005" name="J. Neurochem.">
        <title>Human phenylethanolamine N-methyltransferase pharmacogenomics: gene re-sequencing and functional genomics.</title>
        <authorList>
            <person name="Ji Y."/>
            <person name="Salavaggione O.E."/>
            <person name="Wang L."/>
            <person name="Adjei A.A."/>
            <person name="Eckloff B."/>
            <person name="Wieben E.D."/>
            <person name="Weinshilboum R.M."/>
        </authorList>
    </citation>
    <scope>VARIANTS SER-9; ALA-98; CYS-112 AND THR-175</scope>
    <scope>CHARACTERIZATION OF VARIANTS SER-9; ALA-98; CYS-112 AND THR-175</scope>
    <scope>FUNCTION</scope>
    <scope>CATALYTIC ACTIVITY</scope>
    <scope>BIOPHYSICOCHEMICAL PROPERTIES</scope>
</reference>
<comment type="function">
    <text evidence="1 3 4 6 7">Catalyzes the transmethylation of nonepinephrine (noradrenaline) to form epinephrine (adrenaline), using S-adenosyl-L-methionine as the methyl donor (PubMed:20496117). Other substrates include phenylethanolamine and octopamine (PubMed:16277617, PubMed:16363801, PubMed:8812853). Also methylates normetanephrine (By similarity).</text>
</comment>
<comment type="catalytic activity">
    <reaction evidence="4 7">
        <text>phenylethanolamine + S-adenosyl-L-methionine = N-methylphenylethanolamine + S-adenosyl-L-homocysteine + H(+)</text>
        <dbReference type="Rhea" id="RHEA:12176"/>
        <dbReference type="ChEBI" id="CHEBI:15378"/>
        <dbReference type="ChEBI" id="CHEBI:57741"/>
        <dbReference type="ChEBI" id="CHEBI:57856"/>
        <dbReference type="ChEBI" id="CHEBI:57946"/>
        <dbReference type="ChEBI" id="CHEBI:59789"/>
        <dbReference type="EC" id="2.1.1.28"/>
    </reaction>
    <physiologicalReaction direction="left-to-right" evidence="9">
        <dbReference type="Rhea" id="RHEA:12177"/>
    </physiologicalReaction>
</comment>
<comment type="catalytic activity">
    <reaction evidence="6">
        <text>(R)-noradrenaline + S-adenosyl-L-methionine = (R)-adrenaline + S-adenosyl-L-homocysteine + H(+)</text>
        <dbReference type="Rhea" id="RHEA:25269"/>
        <dbReference type="ChEBI" id="CHEBI:15378"/>
        <dbReference type="ChEBI" id="CHEBI:57856"/>
        <dbReference type="ChEBI" id="CHEBI:59789"/>
        <dbReference type="ChEBI" id="CHEBI:71406"/>
        <dbReference type="ChEBI" id="CHEBI:72587"/>
        <dbReference type="EC" id="2.1.1.28"/>
    </reaction>
    <physiologicalReaction direction="left-to-right" evidence="10">
        <dbReference type="Rhea" id="RHEA:25270"/>
    </physiologicalReaction>
</comment>
<comment type="catalytic activity">
    <reaction evidence="2">
        <text>(R)-normetanephrine + S-adenosyl-L-methionine = (R)-metanephrine + S-adenosyl-L-homocysteine + H(+)</text>
        <dbReference type="Rhea" id="RHEA:70683"/>
        <dbReference type="ChEBI" id="CHEBI:15378"/>
        <dbReference type="ChEBI" id="CHEBI:57856"/>
        <dbReference type="ChEBI" id="CHEBI:59789"/>
        <dbReference type="ChEBI" id="CHEBI:189645"/>
        <dbReference type="ChEBI" id="CHEBI:189646"/>
    </reaction>
    <physiologicalReaction direction="left-to-right" evidence="2">
        <dbReference type="Rhea" id="RHEA:70684"/>
    </physiologicalReaction>
</comment>
<comment type="catalytic activity">
    <reaction evidence="3 4">
        <text>(R)-octopamine + S-adenosyl-L-methionine = (R)-synephrine + S-adenosyl-L-homocysteine + H(+)</text>
        <dbReference type="Rhea" id="RHEA:70519"/>
        <dbReference type="ChEBI" id="CHEBI:15378"/>
        <dbReference type="ChEBI" id="CHEBI:57856"/>
        <dbReference type="ChEBI" id="CHEBI:59789"/>
        <dbReference type="ChEBI" id="CHEBI:63694"/>
        <dbReference type="ChEBI" id="CHEBI:141486"/>
    </reaction>
    <physiologicalReaction direction="left-to-right" evidence="9">
        <dbReference type="Rhea" id="RHEA:70520"/>
    </physiologicalReaction>
</comment>
<comment type="activity regulation">
    <text evidence="6 7">Inhibited by methyl methanethiosulfonate, phenylglyoxal, tetranitromethane and diethyl pyrocarbonate (PubMed:8812853). Inhibited by 4-oxo-1,4-dihydro-quinoline-3,7-dicarboxylic acid, 4-(benzo[d][1,3]dioxol-5-ylamino)-4-oxobutanoic acid and 1,4-diaminonaphthalene-2,6-disulfonic acid (PubMed:20496117).</text>
</comment>
<comment type="biophysicochemical properties">
    <kinetics>
        <KM evidence="4">99 uM for phenylethanolamine</KM>
        <KM evidence="4">3.4 uM for S-adenosyl-L-methionine</KM>
        <KM evidence="4">5.3 uM for octopamine</KM>
        <KM evidence="3">23.5 uM for octopamine</KM>
        <KM evidence="3">6.2 uM for S-adenosyl-L-methionine</KM>
        <KM evidence="7">130 uM for phenylethanolamine</KM>
        <KM evidence="7">16 uM for S-adenosyl-L-methionine</KM>
        <Vmax evidence="7">195.0 pmol/min/mg enzyme for phenylethanolamine</Vmax>
    </kinetics>
</comment>
<comment type="pathway">
    <text evidence="6">Catecholamine biosynthesis; (R)-adrenaline biosynthesis; (R)-adrenaline from (R)-noradrenaline: step 1/1.</text>
</comment>
<comment type="interaction">
    <interactant intactId="EBI-11305767">
        <id>P11086</id>
    </interactant>
    <interactant intactId="EBI-11959635">
        <id>Q9P2G9-2</id>
        <label>KLHL8</label>
    </interactant>
    <organismsDiffer>false</organismsDiffer>
    <experiments>3</experiments>
</comment>
<comment type="interaction">
    <interactant intactId="EBI-11305767">
        <id>P11086</id>
    </interactant>
    <interactant intactId="EBI-739832">
        <id>Q8TBB1</id>
        <label>LNX1</label>
    </interactant>
    <organismsDiffer>false</organismsDiffer>
    <experiments>3</experiments>
</comment>
<comment type="mass spectrometry" mass="30721.0" error="3.0" method="Electrospray" evidence="7"/>
<comment type="similarity">
    <text evidence="8">Belongs to the class I-like SAM-binding methyltransferase superfamily. NNMT/PNMT/TEMT family.</text>
</comment>
<proteinExistence type="evidence at protein level"/>
<organism>
    <name type="scientific">Homo sapiens</name>
    <name type="common">Human</name>
    <dbReference type="NCBI Taxonomy" id="9606"/>
    <lineage>
        <taxon>Eukaryota</taxon>
        <taxon>Metazoa</taxon>
        <taxon>Chordata</taxon>
        <taxon>Craniata</taxon>
        <taxon>Vertebrata</taxon>
        <taxon>Euteleostomi</taxon>
        <taxon>Mammalia</taxon>
        <taxon>Eutheria</taxon>
        <taxon>Euarchontoglires</taxon>
        <taxon>Primates</taxon>
        <taxon>Haplorrhini</taxon>
        <taxon>Catarrhini</taxon>
        <taxon>Hominidae</taxon>
        <taxon>Homo</taxon>
    </lineage>
</organism>
<gene>
    <name type="primary">PNMT</name>
    <name type="synonym">PENT</name>
</gene>
<accession>P11086</accession>
<evidence type="ECO:0000250" key="1">
    <source>
        <dbReference type="UniProtKB" id="P10937"/>
    </source>
</evidence>
<evidence type="ECO:0000250" key="2">
    <source>
        <dbReference type="UniProtKB" id="P10938"/>
    </source>
</evidence>
<evidence type="ECO:0000269" key="3">
    <source>
    </source>
</evidence>
<evidence type="ECO:0000269" key="4">
    <source>
    </source>
</evidence>
<evidence type="ECO:0000269" key="5">
    <source>
    </source>
</evidence>
<evidence type="ECO:0000269" key="6">
    <source>
    </source>
</evidence>
<evidence type="ECO:0000269" key="7">
    <source>
    </source>
</evidence>
<evidence type="ECO:0000305" key="8"/>
<evidence type="ECO:0000305" key="9">
    <source>
    </source>
</evidence>
<evidence type="ECO:0000305" key="10">
    <source>
    </source>
</evidence>
<evidence type="ECO:0007744" key="11">
    <source>
        <dbReference type="PDB" id="2AN4"/>
    </source>
</evidence>
<evidence type="ECO:0007744" key="12">
    <source>
        <dbReference type="PDB" id="2G70"/>
    </source>
</evidence>
<evidence type="ECO:0007744" key="13">
    <source>
        <dbReference type="PDB" id="2G72"/>
    </source>
</evidence>
<evidence type="ECO:0007744" key="14">
    <source>
    </source>
</evidence>
<evidence type="ECO:0007829" key="15">
    <source>
        <dbReference type="PDB" id="4MIK"/>
    </source>
</evidence>
<keyword id="KW-0002">3D-structure</keyword>
<keyword id="KW-0127">Catecholamine biosynthesis</keyword>
<keyword id="KW-0903">Direct protein sequencing</keyword>
<keyword id="KW-0489">Methyltransferase</keyword>
<keyword id="KW-0597">Phosphoprotein</keyword>
<keyword id="KW-1267">Proteomics identification</keyword>
<keyword id="KW-1185">Reference proteome</keyword>
<keyword id="KW-0949">S-adenosyl-L-methionine</keyword>
<keyword id="KW-0808">Transferase</keyword>
<sequence length="282" mass="30855">MSGADRSPNAGAAPDSAPGQAAVASAYQRFEPRAYLRNNYAPPRGDLCNPNGVGPWKLRCLAQTFATGEVSGRTLIDIGSGPTVYQLLSACSHFEDITMTDFLEVNRQELGRWLQEEPGAFNWSMYSQHACLIEGKGECWQDKERQLRARVKRVLPIDVHQPQPLGAGSPAPLPADALVSAFCLEAVSPDLASFQRALDHITTLLRPGGHLLLIGALEESWYLAGEARLTVVPVSEEEVREALVRSGYKVRDLRTYIMPAHLQTGVDDVKGVFFAWAQKVGL</sequence>
<feature type="initiator methionine" description="Removed" evidence="7">
    <location>
        <position position="1"/>
    </location>
</feature>
<feature type="chain" id="PRO_0000159709" description="Phenylethanolamine N-methyltransferase">
    <location>
        <begin position="2"/>
        <end position="282"/>
    </location>
</feature>
<feature type="binding site" evidence="4 5 11 12 13">
    <location>
        <position position="35"/>
    </location>
    <ligand>
        <name>S-adenosyl-L-methionine</name>
        <dbReference type="ChEBI" id="CHEBI:59789"/>
    </ligand>
</feature>
<feature type="binding site" evidence="4 5 11 12 13">
    <location>
        <position position="40"/>
    </location>
    <ligand>
        <name>S-adenosyl-L-methionine</name>
        <dbReference type="ChEBI" id="CHEBI:59789"/>
    </ligand>
</feature>
<feature type="binding site" evidence="5 12 13">
    <location>
        <begin position="79"/>
        <end position="80"/>
    </location>
    <ligand>
        <name>S-adenosyl-L-methionine</name>
        <dbReference type="ChEBI" id="CHEBI:59789"/>
    </ligand>
</feature>
<feature type="binding site" evidence="4 5 11 12 13">
    <location>
        <position position="85"/>
    </location>
    <ligand>
        <name>S-adenosyl-L-methionine</name>
        <dbReference type="ChEBI" id="CHEBI:59789"/>
    </ligand>
</feature>
<feature type="binding site" evidence="4 5 11 12 13">
    <location>
        <position position="101"/>
    </location>
    <ligand>
        <name>S-adenosyl-L-methionine</name>
        <dbReference type="ChEBI" id="CHEBI:59789"/>
    </ligand>
</feature>
<feature type="binding site" evidence="4 5 11 12 13">
    <location>
        <position position="106"/>
    </location>
    <ligand>
        <name>S-adenosyl-L-methionine</name>
        <dbReference type="ChEBI" id="CHEBI:59789"/>
    </ligand>
</feature>
<feature type="binding site" evidence="5 12 13">
    <location>
        <begin position="158"/>
        <end position="159"/>
    </location>
    <ligand>
        <name>S-adenosyl-L-methionine</name>
        <dbReference type="ChEBI" id="CHEBI:59789"/>
    </ligand>
</feature>
<feature type="binding site" evidence="4 5 11 12 13">
    <location>
        <position position="181"/>
    </location>
    <ligand>
        <name>S-adenosyl-L-methionine</name>
        <dbReference type="ChEBI" id="CHEBI:59789"/>
    </ligand>
</feature>
<feature type="binding site" evidence="4 11">
    <location>
        <position position="219"/>
    </location>
    <ligand>
        <name>octopamine</name>
        <dbReference type="ChEBI" id="CHEBI:58025"/>
    </ligand>
</feature>
<feature type="binding site" evidence="4 11">
    <location>
        <position position="267"/>
    </location>
    <ligand>
        <name>octopamine</name>
        <dbReference type="ChEBI" id="CHEBI:58025"/>
    </ligand>
</feature>
<feature type="modified residue" description="Phosphoserine" evidence="14">
    <location>
        <position position="7"/>
    </location>
</feature>
<feature type="sequence variant" id="VAR_029351" description="Slight increase in protein expression and enzyme activity with octopamine as substrate; dbSNP:rs11569781." evidence="3">
    <original>N</original>
    <variation>S</variation>
    <location>
        <position position="9"/>
    </location>
</feature>
<feature type="sequence variant" id="VAR_036829" description="Significant decrease in protein expression and enzyme activity with octopamine as substrate; dbSNP:rs36060376." evidence="3">
    <original>T</original>
    <variation>A</variation>
    <location>
        <position position="98"/>
    </location>
</feature>
<feature type="sequence variant" id="VAR_036830" description="No significant effect on protein expression and enzyme activity with octopamine as substrate; dbSNP:rs34530498." evidence="3">
    <original>R</original>
    <variation>C</variation>
    <location>
        <position position="112"/>
    </location>
</feature>
<feature type="sequence variant" id="VAR_036831" description="No significant effect on protein expression and enzyme activity with octopamine as substrate; dbSNP:rs34341496." evidence="3">
    <original>A</original>
    <variation>T</variation>
    <location>
        <position position="175"/>
    </location>
</feature>
<feature type="sequence variant" id="VAR_037611" description="In dbSNP:rs5639.">
    <original>S</original>
    <variation>C</variation>
    <location>
        <position position="188"/>
    </location>
</feature>
<feature type="sequence variant" id="VAR_037612" description="In dbSNP:rs5640.">
    <original>L</original>
    <variation>H</variation>
    <location>
        <position position="211"/>
    </location>
</feature>
<feature type="sequence variant" id="VAR_037613" description="In dbSNP:rs5641.">
    <original>L</original>
    <variation>Q</variation>
    <location>
        <position position="217"/>
    </location>
</feature>
<feature type="sequence variant" id="VAR_037614" description="In dbSNP:rs5642.">
    <original>R</original>
    <variation>H</variation>
    <location>
        <position position="254"/>
    </location>
</feature>
<feature type="sequence variant" id="VAR_024547" description="In dbSNP:rs5643.">
    <original>W</original>
    <variation>R</variation>
    <location>
        <position position="276"/>
    </location>
</feature>
<feature type="mutagenesis site" description="Strongly increases KM for phenylethanolamine and S-adenosyl-L-methionine." evidence="4">
    <original>Y</original>
    <variation>F</variation>
    <location>
        <position position="35"/>
    </location>
</feature>
<feature type="mutagenesis site" description="Strongly reduced enzyme activity towards phenylethanolamine. Increases affinity for S-adenosyl-L-methionine." evidence="4">
    <original>E</original>
    <variation>A</variation>
    <variation>Q</variation>
    <location>
        <position position="185"/>
    </location>
</feature>
<feature type="mutagenesis site" description="Strongly reduced enzyme activity towards phenylethanolamine. Decreases affinity for phenylethanolamine and S-adenosyl-L-methionine 3-fold." evidence="4">
    <original>E</original>
    <variation>D</variation>
    <location>
        <position position="185"/>
    </location>
</feature>
<feature type="mutagenesis site" description="Reduced enzyme activity towards phenylethanolamine. Decreases affinity for phenylethanolamine 6-fold. Decreases affinity for S-adenosyl-L-methionine 2-fold." evidence="4">
    <original>E</original>
    <variation>A</variation>
    <location>
        <position position="219"/>
    </location>
</feature>
<feature type="mutagenesis site" description="Strongly reduced enzyme activity towards phenylethanolamine. Decreases affinity for phenylethanolamine 200-fold. Decreases affinity for S-adenosyl-L-methionine 3-fold." evidence="4">
    <original>D</original>
    <variation>A</variation>
    <variation>N</variation>
    <location>
        <position position="267"/>
    </location>
</feature>
<feature type="sequence conflict" description="In Ref. 3; AAA60131." evidence="8" ref="3">
    <original>SP</original>
    <variation>AQ</variation>
    <location>
        <begin position="169"/>
        <end position="170"/>
    </location>
</feature>
<feature type="helix" evidence="15">
    <location>
        <begin position="17"/>
        <end position="25"/>
    </location>
</feature>
<feature type="helix" evidence="15">
    <location>
        <begin position="27"/>
        <end position="29"/>
    </location>
</feature>
<feature type="helix" evidence="15">
    <location>
        <begin position="32"/>
        <end position="40"/>
    </location>
</feature>
<feature type="turn" evidence="15">
    <location>
        <begin position="42"/>
        <end position="45"/>
    </location>
</feature>
<feature type="helix" evidence="15">
    <location>
        <begin position="53"/>
        <end position="66"/>
    </location>
</feature>
<feature type="strand" evidence="15">
    <location>
        <begin position="73"/>
        <end position="79"/>
    </location>
</feature>
<feature type="helix" evidence="15">
    <location>
        <begin position="85"/>
        <end position="87"/>
    </location>
</feature>
<feature type="helix" evidence="15">
    <location>
        <begin position="90"/>
        <end position="92"/>
    </location>
</feature>
<feature type="strand" evidence="15">
    <location>
        <begin position="95"/>
        <end position="100"/>
    </location>
</feature>
<feature type="helix" evidence="15">
    <location>
        <begin position="104"/>
        <end position="114"/>
    </location>
</feature>
<feature type="helix" evidence="15">
    <location>
        <begin position="124"/>
        <end position="134"/>
    </location>
</feature>
<feature type="helix" evidence="15">
    <location>
        <begin position="140"/>
        <end position="150"/>
    </location>
</feature>
<feature type="strand" evidence="15">
    <location>
        <begin position="151"/>
        <end position="155"/>
    </location>
</feature>
<feature type="strand" evidence="15">
    <location>
        <begin position="161"/>
        <end position="163"/>
    </location>
</feature>
<feature type="strand" evidence="15">
    <location>
        <begin position="173"/>
        <end position="182"/>
    </location>
</feature>
<feature type="turn" evidence="15">
    <location>
        <begin position="184"/>
        <end position="186"/>
    </location>
</feature>
<feature type="helix" evidence="15">
    <location>
        <begin position="191"/>
        <end position="202"/>
    </location>
</feature>
<feature type="strand" evidence="15">
    <location>
        <begin position="205"/>
        <end position="218"/>
    </location>
</feature>
<feature type="strand" evidence="15">
    <location>
        <begin position="221"/>
        <end position="224"/>
    </location>
</feature>
<feature type="strand" evidence="15">
    <location>
        <begin position="227"/>
        <end position="230"/>
    </location>
</feature>
<feature type="helix" evidence="15">
    <location>
        <begin position="236"/>
        <end position="246"/>
    </location>
</feature>
<feature type="strand" evidence="15">
    <location>
        <begin position="248"/>
        <end position="257"/>
    </location>
</feature>
<feature type="helix" evidence="15">
    <location>
        <begin position="260"/>
        <end position="262"/>
    </location>
</feature>
<feature type="strand" evidence="15">
    <location>
        <begin position="265"/>
        <end position="267"/>
    </location>
</feature>
<feature type="strand" evidence="15">
    <location>
        <begin position="271"/>
        <end position="279"/>
    </location>
</feature>
<name>PNMT_HUMAN</name>